<organismHost>
    <name type="scientific">Ononis</name>
    <dbReference type="NCBI Taxonomy" id="58889"/>
</organismHost>
<feature type="chain" id="PRO_0000222930" description="Capsid protein">
    <location>
        <begin position="1"/>
        <end position="192"/>
    </location>
</feature>
<feature type="region of interest" description="Disordered" evidence="2">
    <location>
        <begin position="1"/>
        <end position="30"/>
    </location>
</feature>
<feature type="compositionally biased region" description="Polar residues" evidence="2">
    <location>
        <begin position="12"/>
        <end position="30"/>
    </location>
</feature>
<accession>P20124</accession>
<comment type="function">
    <text evidence="1">Self-assembles to form a T=3 icosahedral capsid composed of 180 copies of the capsid protein. The capsid encapsulates the single-stranded RNA genome.</text>
</comment>
<comment type="subcellular location">
    <subcellularLocation>
        <location evidence="1">Virion</location>
    </subcellularLocation>
</comment>
<comment type="similarity">
    <text evidence="3">Belongs to the tymoviruses capsid protein family.</text>
</comment>
<protein>
    <recommendedName>
        <fullName>Capsid protein</fullName>
    </recommendedName>
    <alternativeName>
        <fullName>Coat protein</fullName>
    </alternativeName>
    <alternativeName>
        <fullName>Virion protein</fullName>
    </alternativeName>
</protein>
<reference key="1">
    <citation type="journal article" date="1989" name="Virology">
        <title>Nucleotide sequence of the ononis yellow mosaic tymovirus genome.</title>
        <authorList>
            <person name="Ding S.W."/>
            <person name="Keese P."/>
            <person name="Gibbs A."/>
        </authorList>
    </citation>
    <scope>NUCLEOTIDE SEQUENCE [GENOMIC RNA]</scope>
</reference>
<keyword id="KW-0167">Capsid protein</keyword>
<keyword id="KW-1142">T=3 icosahedral capsid protein</keyword>
<keyword id="KW-0946">Virion</keyword>
<proteinExistence type="inferred from homology"/>
<sequence>MEDSQPIKVRQPSISAPGTHLSPNPGQQSPSMVVPFQVSVSDLGVSEVSAQITLSSDPTLAQLTSIYRMASIVECEAVLFPNSTSSKNPVHCDLIWVPSNSSASPKTILQTYGGNRFTVGGPITSNQIISFPLRLDSVNPIIKDSVLYLDSPRLLAFSPAPPETQSIPSASLLIRGKLRLSSILVQPLLTSS</sequence>
<organism>
    <name type="scientific">Ononis yellow mosaic virus</name>
    <dbReference type="NCBI Taxonomy" id="12153"/>
    <lineage>
        <taxon>Viruses</taxon>
        <taxon>Riboviria</taxon>
        <taxon>Orthornavirae</taxon>
        <taxon>Kitrinoviricota</taxon>
        <taxon>Alsuviricetes</taxon>
        <taxon>Tymovirales</taxon>
        <taxon>Tymoviridae</taxon>
        <taxon>Tymovirus</taxon>
        <taxon>Tymovirus ononis</taxon>
    </lineage>
</organism>
<dbReference type="EMBL" id="J04375">
    <property type="protein sequence ID" value="AAA46797.1"/>
    <property type="molecule type" value="Genomic_RNA"/>
</dbReference>
<dbReference type="PIR" id="JQ0108">
    <property type="entry name" value="VCWPYM"/>
</dbReference>
<dbReference type="RefSeq" id="NP_041258.1">
    <property type="nucleotide sequence ID" value="NC_001513.1"/>
</dbReference>
<dbReference type="SMR" id="P20124"/>
<dbReference type="GeneID" id="1493967"/>
<dbReference type="KEGG" id="vg:1493967"/>
<dbReference type="OrthoDB" id="15633at10239"/>
<dbReference type="Proteomes" id="UP000007789">
    <property type="component" value="Genome"/>
</dbReference>
<dbReference type="GO" id="GO:0039617">
    <property type="term" value="C:T=3 icosahedral viral capsid"/>
    <property type="evidence" value="ECO:0007669"/>
    <property type="project" value="UniProtKB-KW"/>
</dbReference>
<dbReference type="GO" id="GO:0005198">
    <property type="term" value="F:structural molecule activity"/>
    <property type="evidence" value="ECO:0007669"/>
    <property type="project" value="InterPro"/>
</dbReference>
<dbReference type="Gene3D" id="2.60.120.20">
    <property type="match status" value="1"/>
</dbReference>
<dbReference type="InterPro" id="IPR000574">
    <property type="entry name" value="Tymo_coat"/>
</dbReference>
<dbReference type="InterPro" id="IPR029053">
    <property type="entry name" value="Viral_coat"/>
</dbReference>
<dbReference type="Pfam" id="PF00983">
    <property type="entry name" value="Tymo_coat"/>
    <property type="match status" value="1"/>
</dbReference>
<dbReference type="SUPFAM" id="SSF88633">
    <property type="entry name" value="Positive stranded ssRNA viruses"/>
    <property type="match status" value="1"/>
</dbReference>
<name>CAPSD_OYMV</name>
<evidence type="ECO:0000250" key="1">
    <source>
        <dbReference type="UniProtKB" id="P20125"/>
    </source>
</evidence>
<evidence type="ECO:0000256" key="2">
    <source>
        <dbReference type="SAM" id="MobiDB-lite"/>
    </source>
</evidence>
<evidence type="ECO:0000305" key="3"/>